<dbReference type="EMBL" id="AE005174">
    <property type="protein sequence ID" value="AAG58451.1"/>
    <property type="molecule type" value="Genomic_DNA"/>
</dbReference>
<dbReference type="EMBL" id="BA000007">
    <property type="protein sequence ID" value="BAB37618.1"/>
    <property type="molecule type" value="Genomic_DNA"/>
</dbReference>
<dbReference type="PIR" id="C91153">
    <property type="entry name" value="C91153"/>
</dbReference>
<dbReference type="PIR" id="G85998">
    <property type="entry name" value="G85998"/>
</dbReference>
<dbReference type="RefSeq" id="NP_312222.1">
    <property type="nucleotide sequence ID" value="NC_002695.1"/>
</dbReference>
<dbReference type="RefSeq" id="WP_000820735.1">
    <property type="nucleotide sequence ID" value="NZ_VOAI01000004.1"/>
</dbReference>
<dbReference type="SMR" id="Q8X884"/>
<dbReference type="STRING" id="155864.Z4702"/>
<dbReference type="GeneID" id="915952"/>
<dbReference type="KEGG" id="ece:Z4702"/>
<dbReference type="KEGG" id="ecs:ECs_4195"/>
<dbReference type="PATRIC" id="fig|386585.9.peg.4378"/>
<dbReference type="eggNOG" id="COG2923">
    <property type="taxonomic scope" value="Bacteria"/>
</dbReference>
<dbReference type="HOGENOM" id="CLU_155943_1_0_6"/>
<dbReference type="OMA" id="EMILIMA"/>
<dbReference type="Proteomes" id="UP000000558">
    <property type="component" value="Chromosome"/>
</dbReference>
<dbReference type="Proteomes" id="UP000002519">
    <property type="component" value="Chromosome"/>
</dbReference>
<dbReference type="GO" id="GO:0005737">
    <property type="term" value="C:cytoplasm"/>
    <property type="evidence" value="ECO:0007669"/>
    <property type="project" value="UniProtKB-SubCell"/>
</dbReference>
<dbReference type="GO" id="GO:0008033">
    <property type="term" value="P:tRNA processing"/>
    <property type="evidence" value="ECO:0007669"/>
    <property type="project" value="UniProtKB-UniRule"/>
</dbReference>
<dbReference type="FunFam" id="3.40.1260.10:FF:000004">
    <property type="entry name" value="Sulfurtransferase TusC"/>
    <property type="match status" value="1"/>
</dbReference>
<dbReference type="Gene3D" id="3.40.1260.10">
    <property type="entry name" value="DsrEFH-like"/>
    <property type="match status" value="1"/>
</dbReference>
<dbReference type="HAMAP" id="MF_00389">
    <property type="entry name" value="Thiourid_synth_C"/>
    <property type="match status" value="1"/>
</dbReference>
<dbReference type="InterPro" id="IPR027396">
    <property type="entry name" value="DsrEFH-like"/>
</dbReference>
<dbReference type="InterPro" id="IPR003787">
    <property type="entry name" value="Sulphur_relay_DsrE/F-like"/>
</dbReference>
<dbReference type="InterPro" id="IPR037450">
    <property type="entry name" value="Sulphur_relay_TusC"/>
</dbReference>
<dbReference type="InterPro" id="IPR017462">
    <property type="entry name" value="Sulphur_relay_TusC/DsrF"/>
</dbReference>
<dbReference type="NCBIfam" id="NF001238">
    <property type="entry name" value="PRK00211.1"/>
    <property type="match status" value="1"/>
</dbReference>
<dbReference type="NCBIfam" id="TIGR03010">
    <property type="entry name" value="sulf_tusC_dsrF"/>
    <property type="match status" value="1"/>
</dbReference>
<dbReference type="PANTHER" id="PTHR38780">
    <property type="entry name" value="PROTEIN TUSC"/>
    <property type="match status" value="1"/>
</dbReference>
<dbReference type="PANTHER" id="PTHR38780:SF1">
    <property type="entry name" value="PROTEIN TUSC"/>
    <property type="match status" value="1"/>
</dbReference>
<dbReference type="Pfam" id="PF02635">
    <property type="entry name" value="DsrE"/>
    <property type="match status" value="1"/>
</dbReference>
<dbReference type="SUPFAM" id="SSF75169">
    <property type="entry name" value="DsrEFH-like"/>
    <property type="match status" value="1"/>
</dbReference>
<name>TUSC_ECO57</name>
<organism>
    <name type="scientific">Escherichia coli O157:H7</name>
    <dbReference type="NCBI Taxonomy" id="83334"/>
    <lineage>
        <taxon>Bacteria</taxon>
        <taxon>Pseudomonadati</taxon>
        <taxon>Pseudomonadota</taxon>
        <taxon>Gammaproteobacteria</taxon>
        <taxon>Enterobacterales</taxon>
        <taxon>Enterobacteriaceae</taxon>
        <taxon>Escherichia</taxon>
    </lineage>
</organism>
<gene>
    <name evidence="1" type="primary">tusC</name>
    <name type="ordered locus">Z4702</name>
    <name type="ordered locus">ECs4195</name>
</gene>
<reference key="1">
    <citation type="journal article" date="2001" name="Nature">
        <title>Genome sequence of enterohaemorrhagic Escherichia coli O157:H7.</title>
        <authorList>
            <person name="Perna N.T."/>
            <person name="Plunkett G. III"/>
            <person name="Burland V."/>
            <person name="Mau B."/>
            <person name="Glasner J.D."/>
            <person name="Rose D.J."/>
            <person name="Mayhew G.F."/>
            <person name="Evans P.S."/>
            <person name="Gregor J."/>
            <person name="Kirkpatrick H.A."/>
            <person name="Posfai G."/>
            <person name="Hackett J."/>
            <person name="Klink S."/>
            <person name="Boutin A."/>
            <person name="Shao Y."/>
            <person name="Miller L."/>
            <person name="Grotbeck E.J."/>
            <person name="Davis N.W."/>
            <person name="Lim A."/>
            <person name="Dimalanta E.T."/>
            <person name="Potamousis K."/>
            <person name="Apodaca J."/>
            <person name="Anantharaman T.S."/>
            <person name="Lin J."/>
            <person name="Yen G."/>
            <person name="Schwartz D.C."/>
            <person name="Welch R.A."/>
            <person name="Blattner F.R."/>
        </authorList>
    </citation>
    <scope>NUCLEOTIDE SEQUENCE [LARGE SCALE GENOMIC DNA]</scope>
    <source>
        <strain>O157:H7 / EDL933 / ATCC 700927 / EHEC</strain>
    </source>
</reference>
<reference key="2">
    <citation type="journal article" date="2001" name="DNA Res.">
        <title>Complete genome sequence of enterohemorrhagic Escherichia coli O157:H7 and genomic comparison with a laboratory strain K-12.</title>
        <authorList>
            <person name="Hayashi T."/>
            <person name="Makino K."/>
            <person name="Ohnishi M."/>
            <person name="Kurokawa K."/>
            <person name="Ishii K."/>
            <person name="Yokoyama K."/>
            <person name="Han C.-G."/>
            <person name="Ohtsubo E."/>
            <person name="Nakayama K."/>
            <person name="Murata T."/>
            <person name="Tanaka M."/>
            <person name="Tobe T."/>
            <person name="Iida T."/>
            <person name="Takami H."/>
            <person name="Honda T."/>
            <person name="Sasakawa C."/>
            <person name="Ogasawara N."/>
            <person name="Yasunaga T."/>
            <person name="Kuhara S."/>
            <person name="Shiba T."/>
            <person name="Hattori M."/>
            <person name="Shinagawa H."/>
        </authorList>
    </citation>
    <scope>NUCLEOTIDE SEQUENCE [LARGE SCALE GENOMIC DNA]</scope>
    <source>
        <strain>O157:H7 / Sakai / RIMD 0509952 / EHEC</strain>
    </source>
</reference>
<protein>
    <recommendedName>
        <fullName evidence="1">Protein TusC</fullName>
    </recommendedName>
    <alternativeName>
        <fullName evidence="1">tRNA 2-thiouridine synthesizing protein C</fullName>
    </alternativeName>
</protein>
<comment type="function">
    <text evidence="1">Part of a sulfur-relay system required for 2-thiolation of 5-methylaminomethyl-2-thiouridine (mnm(5)s(2)U) at tRNA wobble positions.</text>
</comment>
<comment type="subunit">
    <text evidence="1">Heterohexamer, formed by a dimer of trimers. The hexameric TusBCD complex contains 2 copies each of TusB, TusC and TusD. The TusBCD complex interacts with TusE.</text>
</comment>
<comment type="subcellular location">
    <subcellularLocation>
        <location evidence="1">Cytoplasm</location>
    </subcellularLocation>
</comment>
<comment type="similarity">
    <text evidence="1">Belongs to the DsrF/TusC family.</text>
</comment>
<accession>Q8X884</accession>
<feature type="chain" id="PRO_0000214884" description="Protein TusC">
    <location>
        <begin position="1"/>
        <end position="119"/>
    </location>
</feature>
<keyword id="KW-0963">Cytoplasm</keyword>
<keyword id="KW-1185">Reference proteome</keyword>
<keyword id="KW-0819">tRNA processing</keyword>
<evidence type="ECO:0000255" key="1">
    <source>
        <dbReference type="HAMAP-Rule" id="MF_00389"/>
    </source>
</evidence>
<sequence length="119" mass="13145">MKRIAFVFSTVPHGTAAGREGLDALLATSALTDELAVFFIADGVFQLLPGQKPDAVLARDYIATFKLLDLYDIEQCWVCAASLRERGLDPQTPFVVEATPLEADALRRELANYDVILRF</sequence>
<proteinExistence type="inferred from homology"/>